<protein>
    <recommendedName>
        <fullName evidence="1">DNA-directed RNA polymerase subunit alpha</fullName>
        <shortName evidence="1">RNAP subunit alpha</shortName>
        <ecNumber evidence="1">2.7.7.6</ecNumber>
    </recommendedName>
    <alternativeName>
        <fullName evidence="1">RNA polymerase subunit alpha</fullName>
    </alternativeName>
    <alternativeName>
        <fullName evidence="1">Transcriptase subunit alpha</fullName>
    </alternativeName>
</protein>
<evidence type="ECO:0000255" key="1">
    <source>
        <dbReference type="HAMAP-Rule" id="MF_00059"/>
    </source>
</evidence>
<proteinExistence type="inferred from homology"/>
<gene>
    <name evidence="1" type="primary">rpoA</name>
    <name type="ordered locus">GDI3380</name>
    <name type="ordered locus">Gdia_2990</name>
</gene>
<name>RPOA_GLUDA</name>
<accession>A9H3I9</accession>
<accession>B5ZIT0</accession>
<dbReference type="EC" id="2.7.7.6" evidence="1"/>
<dbReference type="EMBL" id="AM889285">
    <property type="protein sequence ID" value="CAP57323.1"/>
    <property type="molecule type" value="Genomic_DNA"/>
</dbReference>
<dbReference type="EMBL" id="CP001189">
    <property type="protein sequence ID" value="ACI52720.1"/>
    <property type="molecule type" value="Genomic_DNA"/>
</dbReference>
<dbReference type="RefSeq" id="WP_012227917.1">
    <property type="nucleotide sequence ID" value="NC_010125.1"/>
</dbReference>
<dbReference type="SMR" id="A9H3I9"/>
<dbReference type="STRING" id="272568.GDI3380"/>
<dbReference type="KEGG" id="gdi:GDI3380"/>
<dbReference type="KEGG" id="gdj:Gdia_2990"/>
<dbReference type="eggNOG" id="COG0202">
    <property type="taxonomic scope" value="Bacteria"/>
</dbReference>
<dbReference type="HOGENOM" id="CLU_053084_0_0_5"/>
<dbReference type="OrthoDB" id="9805706at2"/>
<dbReference type="Proteomes" id="UP000001176">
    <property type="component" value="Chromosome"/>
</dbReference>
<dbReference type="GO" id="GO:0005737">
    <property type="term" value="C:cytoplasm"/>
    <property type="evidence" value="ECO:0007669"/>
    <property type="project" value="UniProtKB-ARBA"/>
</dbReference>
<dbReference type="GO" id="GO:0000428">
    <property type="term" value="C:DNA-directed RNA polymerase complex"/>
    <property type="evidence" value="ECO:0007669"/>
    <property type="project" value="UniProtKB-KW"/>
</dbReference>
<dbReference type="GO" id="GO:0003677">
    <property type="term" value="F:DNA binding"/>
    <property type="evidence" value="ECO:0007669"/>
    <property type="project" value="UniProtKB-UniRule"/>
</dbReference>
<dbReference type="GO" id="GO:0003899">
    <property type="term" value="F:DNA-directed RNA polymerase activity"/>
    <property type="evidence" value="ECO:0007669"/>
    <property type="project" value="UniProtKB-UniRule"/>
</dbReference>
<dbReference type="GO" id="GO:0046983">
    <property type="term" value="F:protein dimerization activity"/>
    <property type="evidence" value="ECO:0007669"/>
    <property type="project" value="InterPro"/>
</dbReference>
<dbReference type="GO" id="GO:0006351">
    <property type="term" value="P:DNA-templated transcription"/>
    <property type="evidence" value="ECO:0007669"/>
    <property type="project" value="UniProtKB-UniRule"/>
</dbReference>
<dbReference type="CDD" id="cd06928">
    <property type="entry name" value="RNAP_alpha_NTD"/>
    <property type="match status" value="1"/>
</dbReference>
<dbReference type="FunFam" id="1.10.150.20:FF:000001">
    <property type="entry name" value="DNA-directed RNA polymerase subunit alpha"/>
    <property type="match status" value="1"/>
</dbReference>
<dbReference type="FunFam" id="2.170.120.12:FF:000001">
    <property type="entry name" value="DNA-directed RNA polymerase subunit alpha"/>
    <property type="match status" value="1"/>
</dbReference>
<dbReference type="Gene3D" id="1.10.150.20">
    <property type="entry name" value="5' to 3' exonuclease, C-terminal subdomain"/>
    <property type="match status" value="1"/>
</dbReference>
<dbReference type="Gene3D" id="2.170.120.12">
    <property type="entry name" value="DNA-directed RNA polymerase, insert domain"/>
    <property type="match status" value="1"/>
</dbReference>
<dbReference type="Gene3D" id="3.30.1360.10">
    <property type="entry name" value="RNA polymerase, RBP11-like subunit"/>
    <property type="match status" value="1"/>
</dbReference>
<dbReference type="HAMAP" id="MF_00059">
    <property type="entry name" value="RNApol_bact_RpoA"/>
    <property type="match status" value="1"/>
</dbReference>
<dbReference type="InterPro" id="IPR011262">
    <property type="entry name" value="DNA-dir_RNA_pol_insert"/>
</dbReference>
<dbReference type="InterPro" id="IPR011263">
    <property type="entry name" value="DNA-dir_RNA_pol_RpoA/D/Rpb3"/>
</dbReference>
<dbReference type="InterPro" id="IPR011773">
    <property type="entry name" value="DNA-dir_RpoA"/>
</dbReference>
<dbReference type="InterPro" id="IPR036603">
    <property type="entry name" value="RBP11-like"/>
</dbReference>
<dbReference type="InterPro" id="IPR011260">
    <property type="entry name" value="RNAP_asu_C"/>
</dbReference>
<dbReference type="InterPro" id="IPR036643">
    <property type="entry name" value="RNApol_insert_sf"/>
</dbReference>
<dbReference type="NCBIfam" id="NF003513">
    <property type="entry name" value="PRK05182.1-2"/>
    <property type="match status" value="1"/>
</dbReference>
<dbReference type="NCBIfam" id="NF003519">
    <property type="entry name" value="PRK05182.2-5"/>
    <property type="match status" value="1"/>
</dbReference>
<dbReference type="NCBIfam" id="TIGR02027">
    <property type="entry name" value="rpoA"/>
    <property type="match status" value="1"/>
</dbReference>
<dbReference type="Pfam" id="PF01000">
    <property type="entry name" value="RNA_pol_A_bac"/>
    <property type="match status" value="1"/>
</dbReference>
<dbReference type="Pfam" id="PF03118">
    <property type="entry name" value="RNA_pol_A_CTD"/>
    <property type="match status" value="1"/>
</dbReference>
<dbReference type="Pfam" id="PF01193">
    <property type="entry name" value="RNA_pol_L"/>
    <property type="match status" value="1"/>
</dbReference>
<dbReference type="SMART" id="SM00662">
    <property type="entry name" value="RPOLD"/>
    <property type="match status" value="1"/>
</dbReference>
<dbReference type="SUPFAM" id="SSF47789">
    <property type="entry name" value="C-terminal domain of RNA polymerase alpha subunit"/>
    <property type="match status" value="1"/>
</dbReference>
<dbReference type="SUPFAM" id="SSF56553">
    <property type="entry name" value="Insert subdomain of RNA polymerase alpha subunit"/>
    <property type="match status" value="1"/>
</dbReference>
<dbReference type="SUPFAM" id="SSF55257">
    <property type="entry name" value="RBP11-like subunits of RNA polymerase"/>
    <property type="match status" value="1"/>
</dbReference>
<sequence length="339" mass="37407">MVLQKNWQSLIKPEKLEVEPGGEPLRTATVVAEPLERGFGMTLGNAIRRVLLSSLQGAAVTAIQIDGVLHEFSSVAGVREDVTDIVLNVKQLALRMHGEGPKRMVLTATGPGEVRAGQIQTGHDIEVMNPDLVICTLDEGVKFGMEFTVNLGKGYVPAAANRPEDAPIGLIPVDAIYSPVRRVSYKVEPTRVGQVTDYDRLLLTVETNGAVTPEDAVALAARILQDQLQLFINFDEPRPVRTEEPQDDLPFNRNLLRKVDELELSVRSANCLKNDNIVYIGDLVQKTEQEMLRTPNFGRKSLNEIKEVLTSMGLSLGMNVPAWPPENIEDLAKRLDEPF</sequence>
<keyword id="KW-0240">DNA-directed RNA polymerase</keyword>
<keyword id="KW-0548">Nucleotidyltransferase</keyword>
<keyword id="KW-1185">Reference proteome</keyword>
<keyword id="KW-0804">Transcription</keyword>
<keyword id="KW-0808">Transferase</keyword>
<feature type="chain" id="PRO_1000075009" description="DNA-directed RNA polymerase subunit alpha">
    <location>
        <begin position="1"/>
        <end position="339"/>
    </location>
</feature>
<feature type="region of interest" description="Alpha N-terminal domain (alpha-NTD)" evidence="1">
    <location>
        <begin position="1"/>
        <end position="235"/>
    </location>
</feature>
<feature type="region of interest" description="Alpha C-terminal domain (alpha-CTD)" evidence="1">
    <location>
        <begin position="251"/>
        <end position="339"/>
    </location>
</feature>
<reference key="1">
    <citation type="journal article" date="2009" name="BMC Genomics">
        <title>Complete genome sequence of the sugarcane nitrogen-fixing endophyte Gluconacetobacter diazotrophicus Pal5.</title>
        <authorList>
            <person name="Bertalan M."/>
            <person name="Albano R."/>
            <person name="de Padua V."/>
            <person name="Rouws L."/>
            <person name="Rojas C."/>
            <person name="Hemerly A."/>
            <person name="Teixeira K."/>
            <person name="Schwab S."/>
            <person name="Araujo J."/>
            <person name="Oliveira A."/>
            <person name="Franca L."/>
            <person name="Magalhaes V."/>
            <person name="Alqueres S."/>
            <person name="Cardoso A."/>
            <person name="Almeida W."/>
            <person name="Loureiro M.M."/>
            <person name="Nogueira E."/>
            <person name="Cidade D."/>
            <person name="Oliveira D."/>
            <person name="Simao T."/>
            <person name="Macedo J."/>
            <person name="Valadao A."/>
            <person name="Dreschsel M."/>
            <person name="Freitas F."/>
            <person name="Vidal M."/>
            <person name="Guedes H."/>
            <person name="Rodrigues E."/>
            <person name="Meneses C."/>
            <person name="Brioso P."/>
            <person name="Pozzer L."/>
            <person name="Figueiredo D."/>
            <person name="Montano H."/>
            <person name="Junior J."/>
            <person name="de Souza Filho G."/>
            <person name="Martin Quintana Flores V."/>
            <person name="Ferreira B."/>
            <person name="Branco A."/>
            <person name="Gonzalez P."/>
            <person name="Guillobel H."/>
            <person name="Lemos M."/>
            <person name="Seibel L."/>
            <person name="Macedo J."/>
            <person name="Alves-Ferreira M."/>
            <person name="Sachetto-Martins G."/>
            <person name="Coelho A."/>
            <person name="Santos E."/>
            <person name="Amaral G."/>
            <person name="Neves A."/>
            <person name="Pacheco A.B."/>
            <person name="Carvalho D."/>
            <person name="Lery L."/>
            <person name="Bisch P."/>
            <person name="Rossle S.C."/>
            <person name="Urmenyi T."/>
            <person name="Rael Pereira A."/>
            <person name="Silva R."/>
            <person name="Rondinelli E."/>
            <person name="von Kruger W."/>
            <person name="Martins O."/>
            <person name="Baldani J.I."/>
            <person name="Ferreira P.C."/>
        </authorList>
    </citation>
    <scope>NUCLEOTIDE SEQUENCE [LARGE SCALE GENOMIC DNA]</scope>
    <source>
        <strain>ATCC 49037 / DSM 5601 / CCUG 37298 / CIP 103539 / LMG 7603 / PAl5</strain>
    </source>
</reference>
<reference key="2">
    <citation type="journal article" date="2010" name="Stand. Genomic Sci.">
        <title>Two genome sequences of the same bacterial strain, Gluconacetobacter diazotrophicus PAl 5, suggest a new standard in genome sequence submission.</title>
        <authorList>
            <person name="Giongo A."/>
            <person name="Tyler H.L."/>
            <person name="Zipperer U.N."/>
            <person name="Triplett E.W."/>
        </authorList>
    </citation>
    <scope>NUCLEOTIDE SEQUENCE [LARGE SCALE GENOMIC DNA]</scope>
    <source>
        <strain>ATCC 49037 / DSM 5601 / CCUG 37298 / CIP 103539 / LMG 7603 / PAl5</strain>
    </source>
</reference>
<organism>
    <name type="scientific">Gluconacetobacter diazotrophicus (strain ATCC 49037 / DSM 5601 / CCUG 37298 / CIP 103539 / LMG 7603 / PAl5)</name>
    <dbReference type="NCBI Taxonomy" id="272568"/>
    <lineage>
        <taxon>Bacteria</taxon>
        <taxon>Pseudomonadati</taxon>
        <taxon>Pseudomonadota</taxon>
        <taxon>Alphaproteobacteria</taxon>
        <taxon>Acetobacterales</taxon>
        <taxon>Acetobacteraceae</taxon>
        <taxon>Gluconacetobacter</taxon>
    </lineage>
</organism>
<comment type="function">
    <text evidence="1">DNA-dependent RNA polymerase catalyzes the transcription of DNA into RNA using the four ribonucleoside triphosphates as substrates.</text>
</comment>
<comment type="catalytic activity">
    <reaction evidence="1">
        <text>RNA(n) + a ribonucleoside 5'-triphosphate = RNA(n+1) + diphosphate</text>
        <dbReference type="Rhea" id="RHEA:21248"/>
        <dbReference type="Rhea" id="RHEA-COMP:14527"/>
        <dbReference type="Rhea" id="RHEA-COMP:17342"/>
        <dbReference type="ChEBI" id="CHEBI:33019"/>
        <dbReference type="ChEBI" id="CHEBI:61557"/>
        <dbReference type="ChEBI" id="CHEBI:140395"/>
        <dbReference type="EC" id="2.7.7.6"/>
    </reaction>
</comment>
<comment type="subunit">
    <text evidence="1">Homodimer. The RNAP catalytic core consists of 2 alpha, 1 beta, 1 beta' and 1 omega subunit. When a sigma factor is associated with the core the holoenzyme is formed, which can initiate transcription.</text>
</comment>
<comment type="domain">
    <text evidence="1">The N-terminal domain is essential for RNAP assembly and basal transcription, whereas the C-terminal domain is involved in interaction with transcriptional regulators and with upstream promoter elements.</text>
</comment>
<comment type="similarity">
    <text evidence="1">Belongs to the RNA polymerase alpha chain family.</text>
</comment>